<feature type="chain" id="PRO_0000109678" description="Glutamate 5-kinase">
    <location>
        <begin position="1"/>
        <end position="368"/>
    </location>
</feature>
<feature type="domain" description="PUA" evidence="1">
    <location>
        <begin position="275"/>
        <end position="353"/>
    </location>
</feature>
<feature type="binding site" evidence="1">
    <location>
        <position position="9"/>
    </location>
    <ligand>
        <name>ATP</name>
        <dbReference type="ChEBI" id="CHEBI:30616"/>
    </ligand>
</feature>
<feature type="binding site" evidence="1">
    <location>
        <position position="49"/>
    </location>
    <ligand>
        <name>substrate</name>
    </ligand>
</feature>
<feature type="binding site" evidence="1">
    <location>
        <position position="136"/>
    </location>
    <ligand>
        <name>substrate</name>
    </ligand>
</feature>
<feature type="binding site" evidence="1">
    <location>
        <position position="148"/>
    </location>
    <ligand>
        <name>substrate</name>
    </ligand>
</feature>
<feature type="binding site" evidence="1">
    <location>
        <begin position="168"/>
        <end position="169"/>
    </location>
    <ligand>
        <name>ATP</name>
        <dbReference type="ChEBI" id="CHEBI:30616"/>
    </ligand>
</feature>
<feature type="binding site" evidence="1">
    <location>
        <begin position="210"/>
        <end position="216"/>
    </location>
    <ligand>
        <name>ATP</name>
        <dbReference type="ChEBI" id="CHEBI:30616"/>
    </ligand>
</feature>
<accession>P43763</accession>
<gene>
    <name evidence="1" type="primary">proB</name>
    <name type="ordered locus">HI_0900</name>
</gene>
<reference key="1">
    <citation type="journal article" date="1995" name="Science">
        <title>Whole-genome random sequencing and assembly of Haemophilus influenzae Rd.</title>
        <authorList>
            <person name="Fleischmann R.D."/>
            <person name="Adams M.D."/>
            <person name="White O."/>
            <person name="Clayton R.A."/>
            <person name="Kirkness E.F."/>
            <person name="Kerlavage A.R."/>
            <person name="Bult C.J."/>
            <person name="Tomb J.-F."/>
            <person name="Dougherty B.A."/>
            <person name="Merrick J.M."/>
            <person name="McKenney K."/>
            <person name="Sutton G.G."/>
            <person name="FitzHugh W."/>
            <person name="Fields C.A."/>
            <person name="Gocayne J.D."/>
            <person name="Scott J.D."/>
            <person name="Shirley R."/>
            <person name="Liu L.-I."/>
            <person name="Glodek A."/>
            <person name="Kelley J.M."/>
            <person name="Weidman J.F."/>
            <person name="Phillips C.A."/>
            <person name="Spriggs T."/>
            <person name="Hedblom E."/>
            <person name="Cotton M.D."/>
            <person name="Utterback T.R."/>
            <person name="Hanna M.C."/>
            <person name="Nguyen D.T."/>
            <person name="Saudek D.M."/>
            <person name="Brandon R.C."/>
            <person name="Fine L.D."/>
            <person name="Fritchman J.L."/>
            <person name="Fuhrmann J.L."/>
            <person name="Geoghagen N.S.M."/>
            <person name="Gnehm C.L."/>
            <person name="McDonald L.A."/>
            <person name="Small K.V."/>
            <person name="Fraser C.M."/>
            <person name="Smith H.O."/>
            <person name="Venter J.C."/>
        </authorList>
    </citation>
    <scope>NUCLEOTIDE SEQUENCE [LARGE SCALE GENOMIC DNA]</scope>
    <source>
        <strain>ATCC 51907 / DSM 11121 / KW20 / Rd</strain>
    </source>
</reference>
<comment type="function">
    <text evidence="1">Catalyzes the transfer of a phosphate group to glutamate to form L-glutamate 5-phosphate.</text>
</comment>
<comment type="catalytic activity">
    <reaction evidence="1">
        <text>L-glutamate + ATP = L-glutamyl 5-phosphate + ADP</text>
        <dbReference type="Rhea" id="RHEA:14877"/>
        <dbReference type="ChEBI" id="CHEBI:29985"/>
        <dbReference type="ChEBI" id="CHEBI:30616"/>
        <dbReference type="ChEBI" id="CHEBI:58274"/>
        <dbReference type="ChEBI" id="CHEBI:456216"/>
        <dbReference type="EC" id="2.7.2.11"/>
    </reaction>
</comment>
<comment type="pathway">
    <text evidence="1">Amino-acid biosynthesis; L-proline biosynthesis; L-glutamate 5-semialdehyde from L-glutamate: step 1/2.</text>
</comment>
<comment type="subcellular location">
    <subcellularLocation>
        <location evidence="1">Cytoplasm</location>
    </subcellularLocation>
</comment>
<comment type="similarity">
    <text evidence="1">Belongs to the glutamate 5-kinase family.</text>
</comment>
<name>PROB_HAEIN</name>
<evidence type="ECO:0000255" key="1">
    <source>
        <dbReference type="HAMAP-Rule" id="MF_00456"/>
    </source>
</evidence>
<keyword id="KW-0028">Amino-acid biosynthesis</keyword>
<keyword id="KW-0067">ATP-binding</keyword>
<keyword id="KW-0963">Cytoplasm</keyword>
<keyword id="KW-0418">Kinase</keyword>
<keyword id="KW-0547">Nucleotide-binding</keyword>
<keyword id="KW-0641">Proline biosynthesis</keyword>
<keyword id="KW-1185">Reference proteome</keyword>
<keyword id="KW-0808">Transferase</keyword>
<organism>
    <name type="scientific">Haemophilus influenzae (strain ATCC 51907 / DSM 11121 / KW20 / Rd)</name>
    <dbReference type="NCBI Taxonomy" id="71421"/>
    <lineage>
        <taxon>Bacteria</taxon>
        <taxon>Pseudomonadati</taxon>
        <taxon>Pseudomonadota</taxon>
        <taxon>Gammaproteobacteria</taxon>
        <taxon>Pasteurellales</taxon>
        <taxon>Pasteurellaceae</taxon>
        <taxon>Haemophilus</taxon>
    </lineage>
</organism>
<dbReference type="EC" id="2.7.2.11" evidence="1"/>
<dbReference type="EMBL" id="L42023">
    <property type="protein sequence ID" value="AAC22560.1"/>
    <property type="molecule type" value="Genomic_DNA"/>
</dbReference>
<dbReference type="PIR" id="D64101">
    <property type="entry name" value="D64101"/>
</dbReference>
<dbReference type="RefSeq" id="NP_439061.1">
    <property type="nucleotide sequence ID" value="NC_000907.1"/>
</dbReference>
<dbReference type="SMR" id="P43763"/>
<dbReference type="STRING" id="71421.HI_0900"/>
<dbReference type="EnsemblBacteria" id="AAC22560">
    <property type="protein sequence ID" value="AAC22560"/>
    <property type="gene ID" value="HI_0900"/>
</dbReference>
<dbReference type="KEGG" id="hin:HI_0900"/>
<dbReference type="PATRIC" id="fig|71421.8.peg.942"/>
<dbReference type="eggNOG" id="COG0263">
    <property type="taxonomic scope" value="Bacteria"/>
</dbReference>
<dbReference type="HOGENOM" id="CLU_025400_2_0_6"/>
<dbReference type="OrthoDB" id="9804434at2"/>
<dbReference type="PhylomeDB" id="P43763"/>
<dbReference type="BioCyc" id="HINF71421:G1GJ1-940-MONOMER"/>
<dbReference type="UniPathway" id="UPA00098">
    <property type="reaction ID" value="UER00359"/>
</dbReference>
<dbReference type="Proteomes" id="UP000000579">
    <property type="component" value="Chromosome"/>
</dbReference>
<dbReference type="GO" id="GO:0005829">
    <property type="term" value="C:cytosol"/>
    <property type="evidence" value="ECO:0000318"/>
    <property type="project" value="GO_Central"/>
</dbReference>
<dbReference type="GO" id="GO:0005524">
    <property type="term" value="F:ATP binding"/>
    <property type="evidence" value="ECO:0007669"/>
    <property type="project" value="UniProtKB-KW"/>
</dbReference>
<dbReference type="GO" id="GO:0004349">
    <property type="term" value="F:glutamate 5-kinase activity"/>
    <property type="evidence" value="ECO:0000318"/>
    <property type="project" value="GO_Central"/>
</dbReference>
<dbReference type="GO" id="GO:0003723">
    <property type="term" value="F:RNA binding"/>
    <property type="evidence" value="ECO:0007669"/>
    <property type="project" value="InterPro"/>
</dbReference>
<dbReference type="GO" id="GO:0055129">
    <property type="term" value="P:L-proline biosynthetic process"/>
    <property type="evidence" value="ECO:0007669"/>
    <property type="project" value="UniProtKB-UniRule"/>
</dbReference>
<dbReference type="GO" id="GO:0006561">
    <property type="term" value="P:proline biosynthetic process"/>
    <property type="evidence" value="ECO:0000318"/>
    <property type="project" value="GO_Central"/>
</dbReference>
<dbReference type="CDD" id="cd04242">
    <property type="entry name" value="AAK_G5K_ProB"/>
    <property type="match status" value="1"/>
</dbReference>
<dbReference type="CDD" id="cd21157">
    <property type="entry name" value="PUA_G5K"/>
    <property type="match status" value="1"/>
</dbReference>
<dbReference type="FunFam" id="2.30.130.10:FF:000003">
    <property type="entry name" value="Glutamate 5-kinase"/>
    <property type="match status" value="1"/>
</dbReference>
<dbReference type="FunFam" id="3.40.1160.10:FF:000006">
    <property type="entry name" value="Glutamate 5-kinase"/>
    <property type="match status" value="1"/>
</dbReference>
<dbReference type="Gene3D" id="3.40.1160.10">
    <property type="entry name" value="Acetylglutamate kinase-like"/>
    <property type="match status" value="2"/>
</dbReference>
<dbReference type="Gene3D" id="2.30.130.10">
    <property type="entry name" value="PUA domain"/>
    <property type="match status" value="1"/>
</dbReference>
<dbReference type="HAMAP" id="MF_00456">
    <property type="entry name" value="ProB"/>
    <property type="match status" value="1"/>
</dbReference>
<dbReference type="InterPro" id="IPR036393">
    <property type="entry name" value="AceGlu_kinase-like_sf"/>
</dbReference>
<dbReference type="InterPro" id="IPR001048">
    <property type="entry name" value="Asp/Glu/Uridylate_kinase"/>
</dbReference>
<dbReference type="InterPro" id="IPR041739">
    <property type="entry name" value="G5K_ProB"/>
</dbReference>
<dbReference type="InterPro" id="IPR001057">
    <property type="entry name" value="Glu/AcGlu_kinase"/>
</dbReference>
<dbReference type="InterPro" id="IPR011529">
    <property type="entry name" value="Glu_5kinase"/>
</dbReference>
<dbReference type="InterPro" id="IPR005715">
    <property type="entry name" value="Glu_5kinase/COase_Synthase"/>
</dbReference>
<dbReference type="InterPro" id="IPR019797">
    <property type="entry name" value="Glutamate_5-kinase_CS"/>
</dbReference>
<dbReference type="InterPro" id="IPR002478">
    <property type="entry name" value="PUA"/>
</dbReference>
<dbReference type="InterPro" id="IPR015947">
    <property type="entry name" value="PUA-like_sf"/>
</dbReference>
<dbReference type="InterPro" id="IPR036974">
    <property type="entry name" value="PUA_sf"/>
</dbReference>
<dbReference type="NCBIfam" id="TIGR01027">
    <property type="entry name" value="proB"/>
    <property type="match status" value="1"/>
</dbReference>
<dbReference type="PANTHER" id="PTHR43654">
    <property type="entry name" value="GLUTAMATE 5-KINASE"/>
    <property type="match status" value="1"/>
</dbReference>
<dbReference type="PANTHER" id="PTHR43654:SF1">
    <property type="entry name" value="ISOPENTENYL PHOSPHATE KINASE"/>
    <property type="match status" value="1"/>
</dbReference>
<dbReference type="Pfam" id="PF00696">
    <property type="entry name" value="AA_kinase"/>
    <property type="match status" value="1"/>
</dbReference>
<dbReference type="Pfam" id="PF01472">
    <property type="entry name" value="PUA"/>
    <property type="match status" value="1"/>
</dbReference>
<dbReference type="PIRSF" id="PIRSF000729">
    <property type="entry name" value="GK"/>
    <property type="match status" value="1"/>
</dbReference>
<dbReference type="PRINTS" id="PR00474">
    <property type="entry name" value="GLU5KINASE"/>
</dbReference>
<dbReference type="SMART" id="SM00359">
    <property type="entry name" value="PUA"/>
    <property type="match status" value="1"/>
</dbReference>
<dbReference type="SUPFAM" id="SSF53633">
    <property type="entry name" value="Carbamate kinase-like"/>
    <property type="match status" value="1"/>
</dbReference>
<dbReference type="SUPFAM" id="SSF88697">
    <property type="entry name" value="PUA domain-like"/>
    <property type="match status" value="1"/>
</dbReference>
<dbReference type="PROSITE" id="PS00902">
    <property type="entry name" value="GLUTAMATE_5_KINASE"/>
    <property type="match status" value="1"/>
</dbReference>
<dbReference type="PROSITE" id="PS50890">
    <property type="entry name" value="PUA"/>
    <property type="match status" value="1"/>
</dbReference>
<proteinExistence type="inferred from homology"/>
<protein>
    <recommendedName>
        <fullName evidence="1">Glutamate 5-kinase</fullName>
        <ecNumber evidence="1">2.7.2.11</ecNumber>
    </recommendedName>
    <alternativeName>
        <fullName evidence="1">Gamma-glutamyl kinase</fullName>
        <shortName evidence="1">GK</shortName>
    </alternativeName>
</protein>
<sequence>MNKKTIVVKFGTSTLTQGSPKLNSPHMMEIVRQIAQLHNDGFRIVIVTSGAIAAGRHYLNHPQLPPTIASKQLLAAVGQSQLIQAWEKLFAIYDIHIGQLLLTRADIEDRERFLNARDTLYALLDNHIIPVINENDAVATAEIKVGDNDNLSALVAILVQAEQLYLLTDQQGLFDSDPRKNPEAKLIPVVEQITDHIRSIAGGSGTNLGTGGMMTKIIAADVATRSGIETIIAPGNRPNVIADLAYEQNIGTKFIAHQSDRLESRKQWLFAAPSAGIITIDNGAQNAILEQNKSLLPAGIINVEGRFSRGEVVKIRTQSGKDIALGMPRYNSDALQLIKGRKSADIENVLGYEYGAVAMHRDDMIILS</sequence>